<reference key="1">
    <citation type="journal article" date="2009" name="PLoS Genet.">
        <title>Organised genome dynamics in the Escherichia coli species results in highly diverse adaptive paths.</title>
        <authorList>
            <person name="Touchon M."/>
            <person name="Hoede C."/>
            <person name="Tenaillon O."/>
            <person name="Barbe V."/>
            <person name="Baeriswyl S."/>
            <person name="Bidet P."/>
            <person name="Bingen E."/>
            <person name="Bonacorsi S."/>
            <person name="Bouchier C."/>
            <person name="Bouvet O."/>
            <person name="Calteau A."/>
            <person name="Chiapello H."/>
            <person name="Clermont O."/>
            <person name="Cruveiller S."/>
            <person name="Danchin A."/>
            <person name="Diard M."/>
            <person name="Dossat C."/>
            <person name="Karoui M.E."/>
            <person name="Frapy E."/>
            <person name="Garry L."/>
            <person name="Ghigo J.M."/>
            <person name="Gilles A.M."/>
            <person name="Johnson J."/>
            <person name="Le Bouguenec C."/>
            <person name="Lescat M."/>
            <person name="Mangenot S."/>
            <person name="Martinez-Jehanne V."/>
            <person name="Matic I."/>
            <person name="Nassif X."/>
            <person name="Oztas S."/>
            <person name="Petit M.A."/>
            <person name="Pichon C."/>
            <person name="Rouy Z."/>
            <person name="Ruf C.S."/>
            <person name="Schneider D."/>
            <person name="Tourret J."/>
            <person name="Vacherie B."/>
            <person name="Vallenet D."/>
            <person name="Medigue C."/>
            <person name="Rocha E.P.C."/>
            <person name="Denamur E."/>
        </authorList>
    </citation>
    <scope>NUCLEOTIDE SEQUENCE [LARGE SCALE GENOMIC DNA]</scope>
    <source>
        <strain>UMN026 / ExPEC</strain>
    </source>
</reference>
<evidence type="ECO:0000255" key="1">
    <source>
        <dbReference type="HAMAP-Rule" id="MF_01820"/>
    </source>
</evidence>
<evidence type="ECO:0000255" key="2">
    <source>
        <dbReference type="PROSITE-ProRule" id="PRU01058"/>
    </source>
</evidence>
<evidence type="ECO:0000256" key="3">
    <source>
        <dbReference type="SAM" id="MobiDB-lite"/>
    </source>
</evidence>
<accession>B7NG98</accession>
<organism>
    <name type="scientific">Escherichia coli O17:K52:H18 (strain UMN026 / ExPEC)</name>
    <dbReference type="NCBI Taxonomy" id="585056"/>
    <lineage>
        <taxon>Bacteria</taxon>
        <taxon>Pseudomonadati</taxon>
        <taxon>Pseudomonadota</taxon>
        <taxon>Gammaproteobacteria</taxon>
        <taxon>Enterobacterales</taxon>
        <taxon>Enterobacteriaceae</taxon>
        <taxon>Escherichia</taxon>
    </lineage>
</organism>
<feature type="chain" id="PRO_1000188072" description="Small ribosomal subunit biogenesis GTPase RsgA">
    <location>
        <begin position="1"/>
        <end position="350"/>
    </location>
</feature>
<feature type="domain" description="CP-type G" evidence="2">
    <location>
        <begin position="104"/>
        <end position="273"/>
    </location>
</feature>
<feature type="region of interest" description="Disordered" evidence="3">
    <location>
        <begin position="1"/>
        <end position="33"/>
    </location>
</feature>
<feature type="compositionally biased region" description="Polar residues" evidence="3">
    <location>
        <begin position="1"/>
        <end position="17"/>
    </location>
</feature>
<feature type="binding site" evidence="1">
    <location>
        <begin position="160"/>
        <end position="163"/>
    </location>
    <ligand>
        <name>GTP</name>
        <dbReference type="ChEBI" id="CHEBI:37565"/>
    </ligand>
</feature>
<feature type="binding site" evidence="1">
    <location>
        <begin position="214"/>
        <end position="222"/>
    </location>
    <ligand>
        <name>GTP</name>
        <dbReference type="ChEBI" id="CHEBI:37565"/>
    </ligand>
</feature>
<feature type="binding site" evidence="1">
    <location>
        <position position="297"/>
    </location>
    <ligand>
        <name>Zn(2+)</name>
        <dbReference type="ChEBI" id="CHEBI:29105"/>
    </ligand>
</feature>
<feature type="binding site" evidence="1">
    <location>
        <position position="302"/>
    </location>
    <ligand>
        <name>Zn(2+)</name>
        <dbReference type="ChEBI" id="CHEBI:29105"/>
    </ligand>
</feature>
<feature type="binding site" evidence="1">
    <location>
        <position position="304"/>
    </location>
    <ligand>
        <name>Zn(2+)</name>
        <dbReference type="ChEBI" id="CHEBI:29105"/>
    </ligand>
</feature>
<feature type="binding site" evidence="1">
    <location>
        <position position="310"/>
    </location>
    <ligand>
        <name>Zn(2+)</name>
        <dbReference type="ChEBI" id="CHEBI:29105"/>
    </ligand>
</feature>
<protein>
    <recommendedName>
        <fullName evidence="1">Small ribosomal subunit biogenesis GTPase RsgA</fullName>
        <ecNumber evidence="1">3.6.1.-</ecNumber>
    </recommendedName>
</protein>
<sequence length="350" mass="39237">MSKNKLSKGQQRRVNANHQRRLKTSKEKPDYDDNLFGEPDEGIVISRFGMHADVESADGDVHRCNIRRTIRSLVTGDRVVWRPGKPAAEGVNVKGIVEAVHERTSVLTRPDFYDGVKPIAANIDQIVIVSAILPELSLNIIDRYLVACETLQIEPIIVLNKIDLLDDEGMEFVNEQMDIYRNIGYRVLMVSSHTQDGLKPLEEALTGRISIFAGQSGVGKSSLLNALLGLQKEILTNDVSDNSGLGQHTTTAARLYHFPHGGDVIDSPGVREFGLWHLEPEQITQGFVEFHDYLGLCKYRDCKHDTDPGCAIREAVEEGKIAETRFENYHRILESMAQVKTRKNFSDTDD</sequence>
<proteinExistence type="inferred from homology"/>
<gene>
    <name evidence="1" type="primary">rsgA</name>
    <name type="ordered locus">ECUMN_4695</name>
</gene>
<name>RSGA_ECOLU</name>
<dbReference type="EC" id="3.6.1.-" evidence="1"/>
<dbReference type="EMBL" id="CU928163">
    <property type="protein sequence ID" value="CAR15810.1"/>
    <property type="molecule type" value="Genomic_DNA"/>
</dbReference>
<dbReference type="RefSeq" id="WP_000041976.1">
    <property type="nucleotide sequence ID" value="NC_011751.1"/>
</dbReference>
<dbReference type="RefSeq" id="YP_002415294.1">
    <property type="nucleotide sequence ID" value="NC_011751.1"/>
</dbReference>
<dbReference type="SMR" id="B7NG98"/>
<dbReference type="STRING" id="585056.ECUMN_4695"/>
<dbReference type="KEGG" id="eum:ECUMN_4695"/>
<dbReference type="PATRIC" id="fig|585056.7.peg.4860"/>
<dbReference type="HOGENOM" id="CLU_033617_2_0_6"/>
<dbReference type="Proteomes" id="UP000007097">
    <property type="component" value="Chromosome"/>
</dbReference>
<dbReference type="GO" id="GO:0005737">
    <property type="term" value="C:cytoplasm"/>
    <property type="evidence" value="ECO:0007669"/>
    <property type="project" value="UniProtKB-SubCell"/>
</dbReference>
<dbReference type="GO" id="GO:0005525">
    <property type="term" value="F:GTP binding"/>
    <property type="evidence" value="ECO:0007669"/>
    <property type="project" value="UniProtKB-UniRule"/>
</dbReference>
<dbReference type="GO" id="GO:0003924">
    <property type="term" value="F:GTPase activity"/>
    <property type="evidence" value="ECO:0007669"/>
    <property type="project" value="UniProtKB-UniRule"/>
</dbReference>
<dbReference type="GO" id="GO:0046872">
    <property type="term" value="F:metal ion binding"/>
    <property type="evidence" value="ECO:0007669"/>
    <property type="project" value="UniProtKB-KW"/>
</dbReference>
<dbReference type="GO" id="GO:0019843">
    <property type="term" value="F:rRNA binding"/>
    <property type="evidence" value="ECO:0007669"/>
    <property type="project" value="UniProtKB-KW"/>
</dbReference>
<dbReference type="GO" id="GO:0042274">
    <property type="term" value="P:ribosomal small subunit biogenesis"/>
    <property type="evidence" value="ECO:0007669"/>
    <property type="project" value="UniProtKB-UniRule"/>
</dbReference>
<dbReference type="CDD" id="cd01854">
    <property type="entry name" value="YjeQ_EngC"/>
    <property type="match status" value="1"/>
</dbReference>
<dbReference type="FunFam" id="1.10.40.50:FF:000001">
    <property type="entry name" value="Small ribosomal subunit biogenesis GTPase RsgA"/>
    <property type="match status" value="1"/>
</dbReference>
<dbReference type="FunFam" id="2.40.50.140:FF:000122">
    <property type="entry name" value="Small ribosomal subunit biogenesis GTPase RsgA"/>
    <property type="match status" value="1"/>
</dbReference>
<dbReference type="FunFam" id="3.40.50.300:FF:000389">
    <property type="entry name" value="Small ribosomal subunit biogenesis GTPase RsgA"/>
    <property type="match status" value="1"/>
</dbReference>
<dbReference type="Gene3D" id="2.40.50.140">
    <property type="entry name" value="Nucleic acid-binding proteins"/>
    <property type="match status" value="1"/>
</dbReference>
<dbReference type="Gene3D" id="3.40.50.300">
    <property type="entry name" value="P-loop containing nucleotide triphosphate hydrolases"/>
    <property type="match status" value="1"/>
</dbReference>
<dbReference type="Gene3D" id="1.10.40.50">
    <property type="entry name" value="Probable gtpase engc, domain 3"/>
    <property type="match status" value="1"/>
</dbReference>
<dbReference type="HAMAP" id="MF_01820">
    <property type="entry name" value="GTPase_RsgA"/>
    <property type="match status" value="1"/>
</dbReference>
<dbReference type="InterPro" id="IPR030378">
    <property type="entry name" value="G_CP_dom"/>
</dbReference>
<dbReference type="InterPro" id="IPR012340">
    <property type="entry name" value="NA-bd_OB-fold"/>
</dbReference>
<dbReference type="InterPro" id="IPR027417">
    <property type="entry name" value="P-loop_NTPase"/>
</dbReference>
<dbReference type="InterPro" id="IPR004881">
    <property type="entry name" value="Ribosome_biogen_GTPase_RsgA"/>
</dbReference>
<dbReference type="InterPro" id="IPR010914">
    <property type="entry name" value="RsgA_GTPase_dom"/>
</dbReference>
<dbReference type="NCBIfam" id="NF008931">
    <property type="entry name" value="PRK12288.1"/>
    <property type="match status" value="1"/>
</dbReference>
<dbReference type="NCBIfam" id="TIGR00157">
    <property type="entry name" value="ribosome small subunit-dependent GTPase A"/>
    <property type="match status" value="1"/>
</dbReference>
<dbReference type="PANTHER" id="PTHR32120">
    <property type="entry name" value="SMALL RIBOSOMAL SUBUNIT BIOGENESIS GTPASE RSGA"/>
    <property type="match status" value="1"/>
</dbReference>
<dbReference type="PANTHER" id="PTHR32120:SF11">
    <property type="entry name" value="SMALL RIBOSOMAL SUBUNIT BIOGENESIS GTPASE RSGA 1, MITOCHONDRIAL-RELATED"/>
    <property type="match status" value="1"/>
</dbReference>
<dbReference type="Pfam" id="PF03193">
    <property type="entry name" value="RsgA_GTPase"/>
    <property type="match status" value="1"/>
</dbReference>
<dbReference type="SUPFAM" id="SSF52540">
    <property type="entry name" value="P-loop containing nucleoside triphosphate hydrolases"/>
    <property type="match status" value="1"/>
</dbReference>
<dbReference type="PROSITE" id="PS50936">
    <property type="entry name" value="ENGC_GTPASE"/>
    <property type="match status" value="1"/>
</dbReference>
<dbReference type="PROSITE" id="PS51721">
    <property type="entry name" value="G_CP"/>
    <property type="match status" value="1"/>
</dbReference>
<comment type="function">
    <text evidence="1">One of several proteins that assist in the late maturation steps of the functional core of the 30S ribosomal subunit. Helps release RbfA from mature subunits. May play a role in the assembly of ribosomal proteins into the subunit. Circularly permuted GTPase that catalyzes slow GTP hydrolysis, GTPase activity is stimulated by the 30S ribosomal subunit.</text>
</comment>
<comment type="cofactor">
    <cofactor evidence="1">
        <name>Zn(2+)</name>
        <dbReference type="ChEBI" id="CHEBI:29105"/>
    </cofactor>
    <text evidence="1">Binds 1 zinc ion per subunit.</text>
</comment>
<comment type="subunit">
    <text evidence="1">Monomer. Associates with 30S ribosomal subunit, binds 16S rRNA.</text>
</comment>
<comment type="subcellular location">
    <subcellularLocation>
        <location evidence="1">Cytoplasm</location>
    </subcellularLocation>
</comment>
<comment type="similarity">
    <text evidence="1">Belongs to the TRAFAC class YlqF/YawG GTPase family. RsgA subfamily.</text>
</comment>
<keyword id="KW-0963">Cytoplasm</keyword>
<keyword id="KW-0342">GTP-binding</keyword>
<keyword id="KW-0378">Hydrolase</keyword>
<keyword id="KW-0479">Metal-binding</keyword>
<keyword id="KW-0547">Nucleotide-binding</keyword>
<keyword id="KW-0690">Ribosome biogenesis</keyword>
<keyword id="KW-0694">RNA-binding</keyword>
<keyword id="KW-0699">rRNA-binding</keyword>
<keyword id="KW-0862">Zinc</keyword>